<dbReference type="EC" id="2.4.1.313" evidence="2"/>
<dbReference type="EMBL" id="BC070684">
    <property type="protein sequence ID" value="AAH70684.1"/>
    <property type="molecule type" value="mRNA"/>
</dbReference>
<dbReference type="RefSeq" id="NP_001084830.1">
    <property type="nucleotide sequence ID" value="NM_001091361.1"/>
</dbReference>
<dbReference type="SMR" id="Q6NRQ1"/>
<dbReference type="CAZy" id="GT31">
    <property type="family name" value="Glycosyltransferase Family 31"/>
</dbReference>
<dbReference type="GlyCosmos" id="Q6NRQ1">
    <property type="glycosylation" value="2 sites, No reported glycans"/>
</dbReference>
<dbReference type="DNASU" id="431874"/>
<dbReference type="GeneID" id="431874"/>
<dbReference type="KEGG" id="xla:431874"/>
<dbReference type="AGR" id="Xenbase:XB-GENE-1012161"/>
<dbReference type="CTD" id="431874"/>
<dbReference type="Xenbase" id="XB-GENE-1012161">
    <property type="gene designation" value="b3galnt2.L"/>
</dbReference>
<dbReference type="OMA" id="GKWAEHD"/>
<dbReference type="OrthoDB" id="2139606at2759"/>
<dbReference type="UniPathway" id="UPA00378"/>
<dbReference type="Proteomes" id="UP000186698">
    <property type="component" value="Chromosome 5L"/>
</dbReference>
<dbReference type="Bgee" id="431874">
    <property type="expression patterns" value="Expressed in muscle tissue and 19 other cell types or tissues"/>
</dbReference>
<dbReference type="GO" id="GO:0005783">
    <property type="term" value="C:endoplasmic reticulum"/>
    <property type="evidence" value="ECO:0000250"/>
    <property type="project" value="UniProtKB"/>
</dbReference>
<dbReference type="GO" id="GO:0000139">
    <property type="term" value="C:Golgi membrane"/>
    <property type="evidence" value="ECO:0000318"/>
    <property type="project" value="GO_Central"/>
</dbReference>
<dbReference type="GO" id="GO:0008376">
    <property type="term" value="F:acetylgalactosaminyltransferase activity"/>
    <property type="evidence" value="ECO:0000250"/>
    <property type="project" value="UniProtKB"/>
</dbReference>
<dbReference type="GO" id="GO:0008194">
    <property type="term" value="F:UDP-glycosyltransferase activity"/>
    <property type="evidence" value="ECO:0000318"/>
    <property type="project" value="GO_Central"/>
</dbReference>
<dbReference type="GO" id="GO:0006486">
    <property type="term" value="P:protein glycosylation"/>
    <property type="evidence" value="ECO:0000250"/>
    <property type="project" value="UniProtKB"/>
</dbReference>
<dbReference type="GO" id="GO:0006493">
    <property type="term" value="P:protein O-linked glycosylation"/>
    <property type="evidence" value="ECO:0000250"/>
    <property type="project" value="UniProtKB"/>
</dbReference>
<dbReference type="FunFam" id="3.90.550.50:FF:000013">
    <property type="entry name" value="Hexosyltransferase"/>
    <property type="match status" value="1"/>
</dbReference>
<dbReference type="Gene3D" id="3.90.550.50">
    <property type="match status" value="1"/>
</dbReference>
<dbReference type="InterPro" id="IPR002659">
    <property type="entry name" value="Glyco_trans_31"/>
</dbReference>
<dbReference type="PANTHER" id="PTHR11214">
    <property type="entry name" value="BETA-1,3-N-ACETYLGLUCOSAMINYLTRANSFERASE"/>
    <property type="match status" value="1"/>
</dbReference>
<dbReference type="PANTHER" id="PTHR11214:SF219">
    <property type="entry name" value="UDP-GALNAC:BETA-1,3-N-ACETYLGALACTOSAMINYLTRANSFERASE 2"/>
    <property type="match status" value="1"/>
</dbReference>
<dbReference type="Pfam" id="PF01762">
    <property type="entry name" value="Galactosyl_T"/>
    <property type="match status" value="1"/>
</dbReference>
<reference key="1">
    <citation type="submission" date="2004-05" db="EMBL/GenBank/DDBJ databases">
        <authorList>
            <consortium name="NIH - Xenopus Gene Collection (XGC) project"/>
        </authorList>
    </citation>
    <scope>NUCLEOTIDE SEQUENCE [LARGE SCALE MRNA]</scope>
    <source>
        <tissue>Ovary</tissue>
    </source>
</reference>
<protein>
    <recommendedName>
        <fullName>UDP-GalNAc:beta-1,3-N-acetylgalactosaminyltransferase 2</fullName>
        <shortName>Beta-1,3-GalNAc-T2</shortName>
        <ecNumber evidence="2">2.4.1.313</ecNumber>
    </recommendedName>
    <alternativeName>
        <fullName>Beta-1,3-N-acetylgalactosaminyltransferase II</fullName>
    </alternativeName>
</protein>
<accession>Q6NRQ1</accession>
<organism>
    <name type="scientific">Xenopus laevis</name>
    <name type="common">African clawed frog</name>
    <dbReference type="NCBI Taxonomy" id="8355"/>
    <lineage>
        <taxon>Eukaryota</taxon>
        <taxon>Metazoa</taxon>
        <taxon>Chordata</taxon>
        <taxon>Craniata</taxon>
        <taxon>Vertebrata</taxon>
        <taxon>Euteleostomi</taxon>
        <taxon>Amphibia</taxon>
        <taxon>Batrachia</taxon>
        <taxon>Anura</taxon>
        <taxon>Pipoidea</taxon>
        <taxon>Pipidae</taxon>
        <taxon>Xenopodinae</taxon>
        <taxon>Xenopus</taxon>
        <taxon>Xenopus</taxon>
    </lineage>
</organism>
<comment type="function">
    <text evidence="1">Beta-1,3-N-acetylgalactosaminyltransferase that synthesizes a unique carbohydrate structure, GalNAc-beta-1-3GlcNAc, on N- and O-glycans. Has no galactose nor galactosaminyl transferase activity toward any acceptor substrate. Involved in alpha-dystroglycan (dag1) glycosylation (By similarity).</text>
</comment>
<comment type="catalytic activity">
    <reaction evidence="2">
        <text>3-O-(N-acetyl-beta-D-glucosaminyl-(1-&gt;4)-alpha-D-mannosyl)-L-threonyl-[protein] + UDP-N-acetyl-alpha-D-galactosamine = 3-O-[beta-D-GalNAc-(1-&gt;3)-beta-D-GlcNAc-(1-&gt;4)-alpha-D-Man]-L-Thr-[protein] + UDP + H(+)</text>
        <dbReference type="Rhea" id="RHEA:37667"/>
        <dbReference type="Rhea" id="RHEA-COMP:13308"/>
        <dbReference type="Rhea" id="RHEA-COMP:13618"/>
        <dbReference type="ChEBI" id="CHEBI:15378"/>
        <dbReference type="ChEBI" id="CHEBI:58223"/>
        <dbReference type="ChEBI" id="CHEBI:67138"/>
        <dbReference type="ChEBI" id="CHEBI:136709"/>
        <dbReference type="ChEBI" id="CHEBI:137540"/>
        <dbReference type="EC" id="2.4.1.313"/>
    </reaction>
</comment>
<comment type="pathway">
    <text>Protein modification; protein glycosylation.</text>
</comment>
<comment type="subcellular location">
    <subcellularLocation>
        <location evidence="1">Golgi apparatus membrane</location>
        <topology evidence="1">Single-pass type II membrane protein</topology>
    </subcellularLocation>
    <subcellularLocation>
        <location evidence="1">Endoplasmic reticulum</location>
    </subcellularLocation>
</comment>
<comment type="similarity">
    <text evidence="4">Belongs to the glycosyltransferase 31 family.</text>
</comment>
<proteinExistence type="evidence at transcript level"/>
<keyword id="KW-0256">Endoplasmic reticulum</keyword>
<keyword id="KW-0325">Glycoprotein</keyword>
<keyword id="KW-0328">Glycosyltransferase</keyword>
<keyword id="KW-0333">Golgi apparatus</keyword>
<keyword id="KW-0472">Membrane</keyword>
<keyword id="KW-1185">Reference proteome</keyword>
<keyword id="KW-0735">Signal-anchor</keyword>
<keyword id="KW-0808">Transferase</keyword>
<keyword id="KW-0812">Transmembrane</keyword>
<keyword id="KW-1133">Transmembrane helix</keyword>
<evidence type="ECO:0000250" key="1"/>
<evidence type="ECO:0000250" key="2">
    <source>
        <dbReference type="UniProtKB" id="Q8NCR0"/>
    </source>
</evidence>
<evidence type="ECO:0000255" key="3"/>
<evidence type="ECO:0000305" key="4"/>
<sequence length="486" mass="55701">MRHLLFLCPCVIGVAFHLWLFNFSGLFSWFLVWSPHSYDIVVGVLSARHNHELRNVIRHTWLQHLNHHSSLSQRVLVKFIIGSHGCDIPVEDREDPYSCKLLNITNPTLKQEIESFSIPDSAAVITEHHVVNVNFRVLYPVVITRLGVFQHDSAAGFQRNITVKLFQTEHEEALFSARFSPASSGVQVNGIWYKPVEQFILPEGFEGTVVWESHDPEGLLSGNVHHVIVNDGGGIFRLTTVKEGLLPYEFTEGVEGIAGGFTYTIHEGETLLNTLETRPERIQNHLAALEKEDALLQEESTTFQDIVFVNVVDTYRNVPSKLLNFYRWTVQLTRFEFLLKTDDDCFIDIDNVLKMVAQKELQKENAWWGNFRLNWAVDRTGKWQELEYLSPAYPAFACGSGYIISNDIVQWLAVNSQRLKTYQGEDVSMGIWMSAIGPSRYQDSRWLCEKKCEAGMLSSPQYTPQELMEIWQQKERCGNPCACEDR</sequence>
<name>B3GL2_XENLA</name>
<gene>
    <name type="primary">b3galnt2</name>
</gene>
<feature type="chain" id="PRO_0000248365" description="UDP-GalNAc:beta-1,3-N-acetylgalactosaminyltransferase 2">
    <location>
        <begin position="1"/>
        <end position="486"/>
    </location>
</feature>
<feature type="topological domain" description="Cytoplasmic" evidence="3">
    <location>
        <begin position="1"/>
        <end position="10"/>
    </location>
</feature>
<feature type="transmembrane region" description="Helical; Signal-anchor for type II membrane protein" evidence="3">
    <location>
        <begin position="11"/>
        <end position="31"/>
    </location>
</feature>
<feature type="topological domain" description="Lumenal" evidence="3">
    <location>
        <begin position="32"/>
        <end position="486"/>
    </location>
</feature>
<feature type="glycosylation site" description="N-linked (GlcNAc...) asparagine" evidence="3">
    <location>
        <position position="103"/>
    </location>
</feature>
<feature type="glycosylation site" description="N-linked (GlcNAc...) asparagine" evidence="3">
    <location>
        <position position="160"/>
    </location>
</feature>